<dbReference type="EC" id="6.1.1.4" evidence="1"/>
<dbReference type="EMBL" id="AE015450">
    <property type="protein sequence ID" value="AAP56783.1"/>
    <property type="molecule type" value="Genomic_DNA"/>
</dbReference>
<dbReference type="RefSeq" id="WP_011113683.1">
    <property type="nucleotide sequence ID" value="NC_004829.2"/>
</dbReference>
<dbReference type="SMR" id="Q7NB47"/>
<dbReference type="KEGG" id="mga:MGA_0087"/>
<dbReference type="PATRIC" id="fig|233150.7.peg.491"/>
<dbReference type="HOGENOM" id="CLU_004427_0_0_14"/>
<dbReference type="OrthoDB" id="9810365at2"/>
<dbReference type="Proteomes" id="UP000001418">
    <property type="component" value="Chromosome"/>
</dbReference>
<dbReference type="GO" id="GO:0005829">
    <property type="term" value="C:cytosol"/>
    <property type="evidence" value="ECO:0007669"/>
    <property type="project" value="TreeGrafter"/>
</dbReference>
<dbReference type="GO" id="GO:0002161">
    <property type="term" value="F:aminoacyl-tRNA deacylase activity"/>
    <property type="evidence" value="ECO:0007669"/>
    <property type="project" value="InterPro"/>
</dbReference>
<dbReference type="GO" id="GO:0005524">
    <property type="term" value="F:ATP binding"/>
    <property type="evidence" value="ECO:0007669"/>
    <property type="project" value="UniProtKB-UniRule"/>
</dbReference>
<dbReference type="GO" id="GO:0004823">
    <property type="term" value="F:leucine-tRNA ligase activity"/>
    <property type="evidence" value="ECO:0007669"/>
    <property type="project" value="UniProtKB-UniRule"/>
</dbReference>
<dbReference type="GO" id="GO:0006429">
    <property type="term" value="P:leucyl-tRNA aminoacylation"/>
    <property type="evidence" value="ECO:0007669"/>
    <property type="project" value="UniProtKB-UniRule"/>
</dbReference>
<dbReference type="CDD" id="cd00812">
    <property type="entry name" value="LeuRS_core"/>
    <property type="match status" value="1"/>
</dbReference>
<dbReference type="FunFam" id="3.40.50.620:FF:000056">
    <property type="entry name" value="Leucine--tRNA ligase"/>
    <property type="match status" value="1"/>
</dbReference>
<dbReference type="FunFam" id="3.40.50.620:FF:000077">
    <property type="entry name" value="Leucine--tRNA ligase"/>
    <property type="match status" value="1"/>
</dbReference>
<dbReference type="Gene3D" id="3.10.20.590">
    <property type="match status" value="1"/>
</dbReference>
<dbReference type="Gene3D" id="3.40.50.620">
    <property type="entry name" value="HUPs"/>
    <property type="match status" value="2"/>
</dbReference>
<dbReference type="Gene3D" id="1.10.730.10">
    <property type="entry name" value="Isoleucyl-tRNA Synthetase, Domain 1"/>
    <property type="match status" value="1"/>
</dbReference>
<dbReference type="HAMAP" id="MF_00049_B">
    <property type="entry name" value="Leu_tRNA_synth_B"/>
    <property type="match status" value="1"/>
</dbReference>
<dbReference type="InterPro" id="IPR001412">
    <property type="entry name" value="aa-tRNA-synth_I_CS"/>
</dbReference>
<dbReference type="InterPro" id="IPR002300">
    <property type="entry name" value="aa-tRNA-synth_Ia"/>
</dbReference>
<dbReference type="InterPro" id="IPR002302">
    <property type="entry name" value="Leu-tRNA-ligase"/>
</dbReference>
<dbReference type="InterPro" id="IPR025709">
    <property type="entry name" value="Leu_tRNA-synth_edit"/>
</dbReference>
<dbReference type="InterPro" id="IPR013155">
    <property type="entry name" value="M/V/L/I-tRNA-synth_anticd-bd"/>
</dbReference>
<dbReference type="InterPro" id="IPR015413">
    <property type="entry name" value="Methionyl/Leucyl_tRNA_Synth"/>
</dbReference>
<dbReference type="InterPro" id="IPR014729">
    <property type="entry name" value="Rossmann-like_a/b/a_fold"/>
</dbReference>
<dbReference type="InterPro" id="IPR009080">
    <property type="entry name" value="tRNAsynth_Ia_anticodon-bd"/>
</dbReference>
<dbReference type="InterPro" id="IPR009008">
    <property type="entry name" value="Val/Leu/Ile-tRNA-synth_edit"/>
</dbReference>
<dbReference type="NCBIfam" id="TIGR00396">
    <property type="entry name" value="leuS_bact"/>
    <property type="match status" value="1"/>
</dbReference>
<dbReference type="PANTHER" id="PTHR43740:SF2">
    <property type="entry name" value="LEUCINE--TRNA LIGASE, MITOCHONDRIAL"/>
    <property type="match status" value="1"/>
</dbReference>
<dbReference type="PANTHER" id="PTHR43740">
    <property type="entry name" value="LEUCYL-TRNA SYNTHETASE"/>
    <property type="match status" value="1"/>
</dbReference>
<dbReference type="Pfam" id="PF08264">
    <property type="entry name" value="Anticodon_1"/>
    <property type="match status" value="1"/>
</dbReference>
<dbReference type="Pfam" id="PF00133">
    <property type="entry name" value="tRNA-synt_1"/>
    <property type="match status" value="1"/>
</dbReference>
<dbReference type="Pfam" id="PF13603">
    <property type="entry name" value="tRNA-synt_1_2"/>
    <property type="match status" value="1"/>
</dbReference>
<dbReference type="Pfam" id="PF09334">
    <property type="entry name" value="tRNA-synt_1g"/>
    <property type="match status" value="1"/>
</dbReference>
<dbReference type="PRINTS" id="PR00985">
    <property type="entry name" value="TRNASYNTHLEU"/>
</dbReference>
<dbReference type="SUPFAM" id="SSF47323">
    <property type="entry name" value="Anticodon-binding domain of a subclass of class I aminoacyl-tRNA synthetases"/>
    <property type="match status" value="1"/>
</dbReference>
<dbReference type="SUPFAM" id="SSF52374">
    <property type="entry name" value="Nucleotidylyl transferase"/>
    <property type="match status" value="1"/>
</dbReference>
<dbReference type="SUPFAM" id="SSF50677">
    <property type="entry name" value="ValRS/IleRS/LeuRS editing domain"/>
    <property type="match status" value="1"/>
</dbReference>
<dbReference type="PROSITE" id="PS00178">
    <property type="entry name" value="AA_TRNA_LIGASE_I"/>
    <property type="match status" value="1"/>
</dbReference>
<sequence>MYNHNLIEKKWAKIWNDQKIYSFQIDKNKPKYYILDMFPYPSGKGLHVGHVKAYMATDVISRWKNALGFNVLHPIGWDAFGLPAEQYAIQTNNHPAKFTQENINNFRTQLKRLGFNYDYRLEVDTTNKNYFKWTQWIFKKLYEHDLAYQADIEVNWCEQLGTVLANEEVLTDENGNKISERGSYPVIKKKMRQWVLKITAFADQLIDDLENLNWPNSIKAMQVNWINKSVGASIKFEIDQLDNQTIEVFSSRADTLFGASFLALSFDHPLVKQKLITDKNNAIEQFIKDNSIDQRVRYQGINTNYFAIHPITKKKIPIYLADYILSDYGTGAVMGVPAHDERDYQFAKQYDLEIIPVIKADQYPYLLDGEHINSEFNNGLNNEQAIQKTIAYLREHNLGDQKINYKLRDWIFSRQRYWGEPFPVLFDEEDNIYLLKDSELPVELPQLSDFSPNKDGLPPLANADDQWLHPIIDQKKYRREINTMPQWAGSCWYYLAYLLKLTDLNQADGDQNYLALNSEKAKELFDHFMPVDLYVGGQEHAVLHLLYARFWYKFLHHIKIVSSTEPFSQLINQGMILGEDNTKMSKSKGNIINPDDLVLSHGADTIRTYVMFMGPLNASLAWNSNALNGTRKFLERVYNLFDRVEINDSINQNLNYDYHNFLKKINKHLENFEFNLVVSEMMIFINACYKQTQVNKEMITNFLIVLSFFAPYLAEELNSKLNNPTLLYKMRLAQWDEAYLVKNTTTISCSINGKFKLVHEFDLDSDEQEVANYFLNQDLIKRNLENKKLVKTIFVKNKVINFIIK</sequence>
<reference key="1">
    <citation type="journal article" date="2003" name="Microbiology">
        <title>The complete genome sequence of the avian pathogen Mycoplasma gallisepticum strain R(low).</title>
        <authorList>
            <person name="Papazisi L."/>
            <person name="Gorton T.S."/>
            <person name="Kutish G."/>
            <person name="Markham P.F."/>
            <person name="Browning G.F."/>
            <person name="Nguyen D.K."/>
            <person name="Swartzell S."/>
            <person name="Madan A."/>
            <person name="Mahairas G."/>
            <person name="Geary S.J."/>
        </authorList>
    </citation>
    <scope>NUCLEOTIDE SEQUENCE [LARGE SCALE GENOMIC DNA]</scope>
    <source>
        <strain>R(low / passage 15 / clone 2)</strain>
    </source>
</reference>
<organism>
    <name type="scientific">Mycoplasmoides gallisepticum (strain R(low / passage 15 / clone 2))</name>
    <name type="common">Mycoplasma gallisepticum</name>
    <dbReference type="NCBI Taxonomy" id="710127"/>
    <lineage>
        <taxon>Bacteria</taxon>
        <taxon>Bacillati</taxon>
        <taxon>Mycoplasmatota</taxon>
        <taxon>Mycoplasmoidales</taxon>
        <taxon>Mycoplasmoidaceae</taxon>
        <taxon>Mycoplasmoides</taxon>
    </lineage>
</organism>
<gene>
    <name evidence="1" type="primary">leuS</name>
    <name type="ordered locus">MYCGA4330</name>
    <name type="ORF">MGA_0087</name>
</gene>
<comment type="catalytic activity">
    <reaction evidence="1">
        <text>tRNA(Leu) + L-leucine + ATP = L-leucyl-tRNA(Leu) + AMP + diphosphate</text>
        <dbReference type="Rhea" id="RHEA:11688"/>
        <dbReference type="Rhea" id="RHEA-COMP:9613"/>
        <dbReference type="Rhea" id="RHEA-COMP:9622"/>
        <dbReference type="ChEBI" id="CHEBI:30616"/>
        <dbReference type="ChEBI" id="CHEBI:33019"/>
        <dbReference type="ChEBI" id="CHEBI:57427"/>
        <dbReference type="ChEBI" id="CHEBI:78442"/>
        <dbReference type="ChEBI" id="CHEBI:78494"/>
        <dbReference type="ChEBI" id="CHEBI:456215"/>
        <dbReference type="EC" id="6.1.1.4"/>
    </reaction>
</comment>
<comment type="subcellular location">
    <subcellularLocation>
        <location evidence="1">Cytoplasm</location>
    </subcellularLocation>
</comment>
<comment type="similarity">
    <text evidence="1">Belongs to the class-I aminoacyl-tRNA synthetase family.</text>
</comment>
<keyword id="KW-0030">Aminoacyl-tRNA synthetase</keyword>
<keyword id="KW-0067">ATP-binding</keyword>
<keyword id="KW-0963">Cytoplasm</keyword>
<keyword id="KW-0436">Ligase</keyword>
<keyword id="KW-0547">Nucleotide-binding</keyword>
<keyword id="KW-0648">Protein biosynthesis</keyword>
<keyword id="KW-1185">Reference proteome</keyword>
<evidence type="ECO:0000255" key="1">
    <source>
        <dbReference type="HAMAP-Rule" id="MF_00049"/>
    </source>
</evidence>
<protein>
    <recommendedName>
        <fullName evidence="1">Leucine--tRNA ligase</fullName>
        <ecNumber evidence="1">6.1.1.4</ecNumber>
    </recommendedName>
    <alternativeName>
        <fullName evidence="1">Leucyl-tRNA synthetase</fullName>
        <shortName evidence="1">LeuRS</shortName>
    </alternativeName>
</protein>
<feature type="chain" id="PRO_0000152044" description="Leucine--tRNA ligase">
    <location>
        <begin position="1"/>
        <end position="805"/>
    </location>
</feature>
<feature type="short sequence motif" description="'HIGH' region">
    <location>
        <begin position="39"/>
        <end position="50"/>
    </location>
</feature>
<feature type="short sequence motif" description="'KMSKS' region">
    <location>
        <begin position="583"/>
        <end position="587"/>
    </location>
</feature>
<feature type="binding site" evidence="1">
    <location>
        <position position="586"/>
    </location>
    <ligand>
        <name>ATP</name>
        <dbReference type="ChEBI" id="CHEBI:30616"/>
    </ligand>
</feature>
<name>SYL_MYCGA</name>
<proteinExistence type="inferred from homology"/>
<accession>Q7NB47</accession>